<name>ACCD_STRMN</name>
<evidence type="ECO:0000255" key="1">
    <source>
        <dbReference type="HAMAP-Rule" id="MF_01395"/>
    </source>
</evidence>
<evidence type="ECO:0000255" key="2">
    <source>
        <dbReference type="PROSITE-ProRule" id="PRU01136"/>
    </source>
</evidence>
<dbReference type="EC" id="2.1.3.15" evidence="1"/>
<dbReference type="EMBL" id="AP010655">
    <property type="protein sequence ID" value="BAH87414.1"/>
    <property type="molecule type" value="Genomic_DNA"/>
</dbReference>
<dbReference type="SMR" id="C6SNX2"/>
<dbReference type="KEGG" id="smc:SmuNN2025_0388"/>
<dbReference type="HOGENOM" id="CLU_015486_1_1_9"/>
<dbReference type="UniPathway" id="UPA00655">
    <property type="reaction ID" value="UER00711"/>
</dbReference>
<dbReference type="GO" id="GO:0009317">
    <property type="term" value="C:acetyl-CoA carboxylase complex"/>
    <property type="evidence" value="ECO:0007669"/>
    <property type="project" value="InterPro"/>
</dbReference>
<dbReference type="GO" id="GO:0003989">
    <property type="term" value="F:acetyl-CoA carboxylase activity"/>
    <property type="evidence" value="ECO:0007669"/>
    <property type="project" value="InterPro"/>
</dbReference>
<dbReference type="GO" id="GO:0005524">
    <property type="term" value="F:ATP binding"/>
    <property type="evidence" value="ECO:0007669"/>
    <property type="project" value="UniProtKB-KW"/>
</dbReference>
<dbReference type="GO" id="GO:0016743">
    <property type="term" value="F:carboxyl- or carbamoyltransferase activity"/>
    <property type="evidence" value="ECO:0007669"/>
    <property type="project" value="UniProtKB-UniRule"/>
</dbReference>
<dbReference type="GO" id="GO:0008270">
    <property type="term" value="F:zinc ion binding"/>
    <property type="evidence" value="ECO:0007669"/>
    <property type="project" value="UniProtKB-UniRule"/>
</dbReference>
<dbReference type="GO" id="GO:0006633">
    <property type="term" value="P:fatty acid biosynthetic process"/>
    <property type="evidence" value="ECO:0007669"/>
    <property type="project" value="UniProtKB-KW"/>
</dbReference>
<dbReference type="GO" id="GO:2001295">
    <property type="term" value="P:malonyl-CoA biosynthetic process"/>
    <property type="evidence" value="ECO:0007669"/>
    <property type="project" value="UniProtKB-UniRule"/>
</dbReference>
<dbReference type="Gene3D" id="3.90.226.10">
    <property type="entry name" value="2-enoyl-CoA Hydratase, Chain A, domain 1"/>
    <property type="match status" value="1"/>
</dbReference>
<dbReference type="HAMAP" id="MF_01395">
    <property type="entry name" value="AcetylCoA_CT_beta"/>
    <property type="match status" value="1"/>
</dbReference>
<dbReference type="InterPro" id="IPR034733">
    <property type="entry name" value="AcCoA_carboxyl_beta"/>
</dbReference>
<dbReference type="InterPro" id="IPR000438">
    <property type="entry name" value="Acetyl_CoA_COase_Trfase_b_su"/>
</dbReference>
<dbReference type="InterPro" id="IPR029045">
    <property type="entry name" value="ClpP/crotonase-like_dom_sf"/>
</dbReference>
<dbReference type="InterPro" id="IPR011762">
    <property type="entry name" value="COA_CT_N"/>
</dbReference>
<dbReference type="NCBIfam" id="TIGR00515">
    <property type="entry name" value="accD"/>
    <property type="match status" value="1"/>
</dbReference>
<dbReference type="PANTHER" id="PTHR42995">
    <property type="entry name" value="ACETYL-COENZYME A CARBOXYLASE CARBOXYL TRANSFERASE SUBUNIT BETA, CHLOROPLASTIC"/>
    <property type="match status" value="1"/>
</dbReference>
<dbReference type="PANTHER" id="PTHR42995:SF5">
    <property type="entry name" value="ACETYL-COENZYME A CARBOXYLASE CARBOXYL TRANSFERASE SUBUNIT BETA, CHLOROPLASTIC"/>
    <property type="match status" value="1"/>
</dbReference>
<dbReference type="Pfam" id="PF01039">
    <property type="entry name" value="Carboxyl_trans"/>
    <property type="match status" value="1"/>
</dbReference>
<dbReference type="PRINTS" id="PR01070">
    <property type="entry name" value="ACCCTRFRASEB"/>
</dbReference>
<dbReference type="SUPFAM" id="SSF52096">
    <property type="entry name" value="ClpP/crotonase"/>
    <property type="match status" value="1"/>
</dbReference>
<dbReference type="PROSITE" id="PS50980">
    <property type="entry name" value="COA_CT_NTER"/>
    <property type="match status" value="1"/>
</dbReference>
<gene>
    <name evidence="1" type="primary">accD</name>
    <name type="ordered locus">SmuNN2025_0388</name>
</gene>
<protein>
    <recommendedName>
        <fullName evidence="1">Acetyl-coenzyme A carboxylase carboxyl transferase subunit beta</fullName>
        <shortName evidence="1">ACCase subunit beta</shortName>
        <shortName evidence="1">Acetyl-CoA carboxylase carboxyltransferase subunit beta</shortName>
        <ecNumber evidence="1">2.1.3.15</ecNumber>
    </recommendedName>
</protein>
<proteinExistence type="inferred from homology"/>
<accession>C6SNX2</accession>
<feature type="chain" id="PRO_0000389870" description="Acetyl-coenzyme A carboxylase carboxyl transferase subunit beta">
    <location>
        <begin position="1"/>
        <end position="270"/>
    </location>
</feature>
<feature type="domain" description="CoA carboxyltransferase N-terminal" evidence="2">
    <location>
        <begin position="16"/>
        <end position="270"/>
    </location>
</feature>
<feature type="zinc finger region" description="C4-type" evidence="1">
    <location>
        <begin position="20"/>
        <end position="41"/>
    </location>
</feature>
<feature type="binding site" evidence="1">
    <location>
        <position position="20"/>
    </location>
    <ligand>
        <name>Zn(2+)</name>
        <dbReference type="ChEBI" id="CHEBI:29105"/>
    </ligand>
</feature>
<feature type="binding site" evidence="1">
    <location>
        <position position="23"/>
    </location>
    <ligand>
        <name>Zn(2+)</name>
        <dbReference type="ChEBI" id="CHEBI:29105"/>
    </ligand>
</feature>
<feature type="binding site" evidence="1">
    <location>
        <position position="38"/>
    </location>
    <ligand>
        <name>Zn(2+)</name>
        <dbReference type="ChEBI" id="CHEBI:29105"/>
    </ligand>
</feature>
<feature type="binding site" evidence="1">
    <location>
        <position position="41"/>
    </location>
    <ligand>
        <name>Zn(2+)</name>
        <dbReference type="ChEBI" id="CHEBI:29105"/>
    </ligand>
</feature>
<sequence length="270" mass="29723">MKKTKERETPEVPDELFAKCPACKHMIYQKDLGLEKICPKCFYNFRISAKERLAITVDGDSFQEMFTGIKSKDPLNFPAYQEKLAATQSKTGLDEAVVTGTAEFTGQKAALAIMDSNFIMASMGTVVGEKITRLFEYAREERLPVVIFTASGGARMQEGIMSLMQMAKISAAVKRHSNAGLFYLTVLTDPTTGGVTASFAMEGDIILAEPQTLIGFAGRRVIETTVRETLPEGFQKAEFLLEHGFVDAIVKRTELKKTIAKLLAFHGGSK</sequence>
<comment type="function">
    <text evidence="1">Component of the acetyl coenzyme A carboxylase (ACC) complex. Biotin carboxylase (BC) catalyzes the carboxylation of biotin on its carrier protein (BCCP) and then the CO(2) group is transferred by the transcarboxylase to acetyl-CoA to form malonyl-CoA.</text>
</comment>
<comment type="catalytic activity">
    <reaction evidence="1">
        <text>N(6)-carboxybiotinyl-L-lysyl-[protein] + acetyl-CoA = N(6)-biotinyl-L-lysyl-[protein] + malonyl-CoA</text>
        <dbReference type="Rhea" id="RHEA:54728"/>
        <dbReference type="Rhea" id="RHEA-COMP:10505"/>
        <dbReference type="Rhea" id="RHEA-COMP:10506"/>
        <dbReference type="ChEBI" id="CHEBI:57288"/>
        <dbReference type="ChEBI" id="CHEBI:57384"/>
        <dbReference type="ChEBI" id="CHEBI:83144"/>
        <dbReference type="ChEBI" id="CHEBI:83145"/>
        <dbReference type="EC" id="2.1.3.15"/>
    </reaction>
</comment>
<comment type="cofactor">
    <cofactor evidence="1">
        <name>Zn(2+)</name>
        <dbReference type="ChEBI" id="CHEBI:29105"/>
    </cofactor>
    <text evidence="1">Binds 1 zinc ion per subunit.</text>
</comment>
<comment type="pathway">
    <text evidence="1">Lipid metabolism; malonyl-CoA biosynthesis; malonyl-CoA from acetyl-CoA: step 1/1.</text>
</comment>
<comment type="subunit">
    <text evidence="1">Acetyl-CoA carboxylase is a heterohexamer composed of biotin carboxyl carrier protein (AccB), biotin carboxylase (AccC) and two subunits each of ACCase subunit alpha (AccA) and ACCase subunit beta (AccD).</text>
</comment>
<comment type="subcellular location">
    <subcellularLocation>
        <location evidence="1">Cytoplasm</location>
    </subcellularLocation>
</comment>
<comment type="similarity">
    <text evidence="1">Belongs to the AccD/PCCB family.</text>
</comment>
<keyword id="KW-0067">ATP-binding</keyword>
<keyword id="KW-0963">Cytoplasm</keyword>
<keyword id="KW-0275">Fatty acid biosynthesis</keyword>
<keyword id="KW-0276">Fatty acid metabolism</keyword>
<keyword id="KW-0444">Lipid biosynthesis</keyword>
<keyword id="KW-0443">Lipid metabolism</keyword>
<keyword id="KW-0479">Metal-binding</keyword>
<keyword id="KW-0547">Nucleotide-binding</keyword>
<keyword id="KW-0808">Transferase</keyword>
<keyword id="KW-0862">Zinc</keyword>
<keyword id="KW-0863">Zinc-finger</keyword>
<reference key="1">
    <citation type="journal article" date="2009" name="BMC Genomics">
        <title>Comparative genomic analyses of Streptococcus mutans provide insights into chromosomal shuffling and species-specific content.</title>
        <authorList>
            <person name="Maruyama F."/>
            <person name="Kobata M."/>
            <person name="Kurokawa K."/>
            <person name="Nishida K."/>
            <person name="Sakurai A."/>
            <person name="Nakano K."/>
            <person name="Nomura R."/>
            <person name="Kawabata S."/>
            <person name="Ooshima T."/>
            <person name="Nakai K."/>
            <person name="Hattori M."/>
            <person name="Hamada S."/>
            <person name="Nakagawa I."/>
        </authorList>
    </citation>
    <scope>NUCLEOTIDE SEQUENCE [LARGE SCALE GENOMIC DNA]</scope>
    <source>
        <strain>NN2025</strain>
    </source>
</reference>
<organism>
    <name type="scientific">Streptococcus mutans serotype c (strain NN2025)</name>
    <dbReference type="NCBI Taxonomy" id="511691"/>
    <lineage>
        <taxon>Bacteria</taxon>
        <taxon>Bacillati</taxon>
        <taxon>Bacillota</taxon>
        <taxon>Bacilli</taxon>
        <taxon>Lactobacillales</taxon>
        <taxon>Streptococcaceae</taxon>
        <taxon>Streptococcus</taxon>
    </lineage>
</organism>